<sequence>MMSLWIAIGALSTLALVSGVVLGFAARRFQVDEDPVVEQVDAILPQSQCGQCGYPGCRPYAEAVSTGGEKINKCAPGGEQVMLKLAELLAVEPQPLDGDESAAHPQRKVAFIDEANCIGCTKCIQACPVDAIIGATRAMHTVLSDLCTGCDLCVAPCPTDCIEMIPVATTTANWKWDLNTIPVKNLPN</sequence>
<name>RNFB_YERPA</name>
<accession>Q1C7K2</accession>
<organism>
    <name type="scientific">Yersinia pestis bv. Antiqua (strain Antiqua)</name>
    <dbReference type="NCBI Taxonomy" id="360102"/>
    <lineage>
        <taxon>Bacteria</taxon>
        <taxon>Pseudomonadati</taxon>
        <taxon>Pseudomonadota</taxon>
        <taxon>Gammaproteobacteria</taxon>
        <taxon>Enterobacterales</taxon>
        <taxon>Yersiniaceae</taxon>
        <taxon>Yersinia</taxon>
    </lineage>
</organism>
<evidence type="ECO:0000255" key="1">
    <source>
        <dbReference type="HAMAP-Rule" id="MF_00463"/>
    </source>
</evidence>
<gene>
    <name evidence="1" type="primary">rnfB</name>
    <name type="ordered locus">YPA_1604</name>
</gene>
<proteinExistence type="inferred from homology"/>
<protein>
    <recommendedName>
        <fullName evidence="1">Ion-translocating oxidoreductase complex subunit B</fullName>
        <ecNumber evidence="1">7.-.-.-</ecNumber>
    </recommendedName>
    <alternativeName>
        <fullName evidence="1">Rnf electron transport complex subunit B</fullName>
    </alternativeName>
</protein>
<feature type="chain" id="PRO_1000013666" description="Ion-translocating oxidoreductase complex subunit B">
    <location>
        <begin position="1"/>
        <end position="188"/>
    </location>
</feature>
<feature type="domain" description="4Fe-4S" evidence="1">
    <location>
        <begin position="32"/>
        <end position="91"/>
    </location>
</feature>
<feature type="domain" description="4Fe-4S ferredoxin-type 1" evidence="1">
    <location>
        <begin position="108"/>
        <end position="137"/>
    </location>
</feature>
<feature type="domain" description="4Fe-4S ferredoxin-type 2" evidence="1">
    <location>
        <begin position="138"/>
        <end position="167"/>
    </location>
</feature>
<feature type="region of interest" description="Hydrophobic" evidence="1">
    <location>
        <begin position="1"/>
        <end position="26"/>
    </location>
</feature>
<feature type="binding site" evidence="1">
    <location>
        <position position="49"/>
    </location>
    <ligand>
        <name>[4Fe-4S] cluster</name>
        <dbReference type="ChEBI" id="CHEBI:49883"/>
        <label>1</label>
    </ligand>
</feature>
<feature type="binding site" evidence="1">
    <location>
        <position position="52"/>
    </location>
    <ligand>
        <name>[4Fe-4S] cluster</name>
        <dbReference type="ChEBI" id="CHEBI:49883"/>
        <label>1</label>
    </ligand>
</feature>
<feature type="binding site" evidence="1">
    <location>
        <position position="57"/>
    </location>
    <ligand>
        <name>[4Fe-4S] cluster</name>
        <dbReference type="ChEBI" id="CHEBI:49883"/>
        <label>1</label>
    </ligand>
</feature>
<feature type="binding site" evidence="1">
    <location>
        <position position="74"/>
    </location>
    <ligand>
        <name>[4Fe-4S] cluster</name>
        <dbReference type="ChEBI" id="CHEBI:49883"/>
        <label>1</label>
    </ligand>
</feature>
<feature type="binding site" evidence="1">
    <location>
        <position position="117"/>
    </location>
    <ligand>
        <name>[4Fe-4S] cluster</name>
        <dbReference type="ChEBI" id="CHEBI:49883"/>
        <label>2</label>
    </ligand>
</feature>
<feature type="binding site" evidence="1">
    <location>
        <position position="120"/>
    </location>
    <ligand>
        <name>[4Fe-4S] cluster</name>
        <dbReference type="ChEBI" id="CHEBI:49883"/>
        <label>2</label>
    </ligand>
</feature>
<feature type="binding site" evidence="1">
    <location>
        <position position="123"/>
    </location>
    <ligand>
        <name>[4Fe-4S] cluster</name>
        <dbReference type="ChEBI" id="CHEBI:49883"/>
        <label>2</label>
    </ligand>
</feature>
<feature type="binding site" evidence="1">
    <location>
        <position position="127"/>
    </location>
    <ligand>
        <name>[4Fe-4S] cluster</name>
        <dbReference type="ChEBI" id="CHEBI:49883"/>
        <label>3</label>
    </ligand>
</feature>
<feature type="binding site" evidence="1">
    <location>
        <position position="147"/>
    </location>
    <ligand>
        <name>[4Fe-4S] cluster</name>
        <dbReference type="ChEBI" id="CHEBI:49883"/>
        <label>3</label>
    </ligand>
</feature>
<feature type="binding site" evidence="1">
    <location>
        <position position="150"/>
    </location>
    <ligand>
        <name>[4Fe-4S] cluster</name>
        <dbReference type="ChEBI" id="CHEBI:49883"/>
        <label>3</label>
    </ligand>
</feature>
<feature type="binding site" evidence="1">
    <location>
        <position position="153"/>
    </location>
    <ligand>
        <name>[4Fe-4S] cluster</name>
        <dbReference type="ChEBI" id="CHEBI:49883"/>
        <label>3</label>
    </ligand>
</feature>
<feature type="binding site" evidence="1">
    <location>
        <position position="157"/>
    </location>
    <ligand>
        <name>[4Fe-4S] cluster</name>
        <dbReference type="ChEBI" id="CHEBI:49883"/>
        <label>2</label>
    </ligand>
</feature>
<keyword id="KW-0004">4Fe-4S</keyword>
<keyword id="KW-0997">Cell inner membrane</keyword>
<keyword id="KW-1003">Cell membrane</keyword>
<keyword id="KW-0249">Electron transport</keyword>
<keyword id="KW-0408">Iron</keyword>
<keyword id="KW-0411">Iron-sulfur</keyword>
<keyword id="KW-0472">Membrane</keyword>
<keyword id="KW-0479">Metal-binding</keyword>
<keyword id="KW-0677">Repeat</keyword>
<keyword id="KW-1278">Translocase</keyword>
<keyword id="KW-0813">Transport</keyword>
<reference key="1">
    <citation type="journal article" date="2006" name="J. Bacteriol.">
        <title>Complete genome sequence of Yersinia pestis strains Antiqua and Nepal516: evidence of gene reduction in an emerging pathogen.</title>
        <authorList>
            <person name="Chain P.S.G."/>
            <person name="Hu P."/>
            <person name="Malfatti S.A."/>
            <person name="Radnedge L."/>
            <person name="Larimer F."/>
            <person name="Vergez L.M."/>
            <person name="Worsham P."/>
            <person name="Chu M.C."/>
            <person name="Andersen G.L."/>
        </authorList>
    </citation>
    <scope>NUCLEOTIDE SEQUENCE [LARGE SCALE GENOMIC DNA]</scope>
    <source>
        <strain>Antiqua</strain>
    </source>
</reference>
<dbReference type="EC" id="7.-.-.-" evidence="1"/>
<dbReference type="EMBL" id="CP000308">
    <property type="protein sequence ID" value="ABG13570.1"/>
    <property type="molecule type" value="Genomic_DNA"/>
</dbReference>
<dbReference type="KEGG" id="ypa:YPA_1604"/>
<dbReference type="Proteomes" id="UP000001971">
    <property type="component" value="Chromosome"/>
</dbReference>
<dbReference type="GO" id="GO:0005886">
    <property type="term" value="C:plasma membrane"/>
    <property type="evidence" value="ECO:0007669"/>
    <property type="project" value="UniProtKB-SubCell"/>
</dbReference>
<dbReference type="GO" id="GO:0051539">
    <property type="term" value="F:4 iron, 4 sulfur cluster binding"/>
    <property type="evidence" value="ECO:0007669"/>
    <property type="project" value="UniProtKB-UniRule"/>
</dbReference>
<dbReference type="GO" id="GO:0009055">
    <property type="term" value="F:electron transfer activity"/>
    <property type="evidence" value="ECO:0007669"/>
    <property type="project" value="InterPro"/>
</dbReference>
<dbReference type="GO" id="GO:0046872">
    <property type="term" value="F:metal ion binding"/>
    <property type="evidence" value="ECO:0007669"/>
    <property type="project" value="UniProtKB-KW"/>
</dbReference>
<dbReference type="GO" id="GO:0022900">
    <property type="term" value="P:electron transport chain"/>
    <property type="evidence" value="ECO:0007669"/>
    <property type="project" value="UniProtKB-UniRule"/>
</dbReference>
<dbReference type="FunFam" id="1.10.15.40:FF:000001">
    <property type="entry name" value="Ion-translocating oxidoreductase complex subunit B"/>
    <property type="match status" value="1"/>
</dbReference>
<dbReference type="Gene3D" id="3.30.70.20">
    <property type="match status" value="1"/>
</dbReference>
<dbReference type="Gene3D" id="1.10.15.40">
    <property type="entry name" value="Electron transport complex subunit B, putative Fe-S cluster"/>
    <property type="match status" value="1"/>
</dbReference>
<dbReference type="HAMAP" id="MF_00463">
    <property type="entry name" value="RsxB_RnfB"/>
    <property type="match status" value="1"/>
</dbReference>
<dbReference type="InterPro" id="IPR007202">
    <property type="entry name" value="4Fe-4S_dom"/>
</dbReference>
<dbReference type="InterPro" id="IPR017896">
    <property type="entry name" value="4Fe4S_Fe-S-bd"/>
</dbReference>
<dbReference type="InterPro" id="IPR017900">
    <property type="entry name" value="4Fe4S_Fe_S_CS"/>
</dbReference>
<dbReference type="InterPro" id="IPR010207">
    <property type="entry name" value="Elect_transpt_cplx_RnfB/RsxB"/>
</dbReference>
<dbReference type="InterPro" id="IPR016463">
    <property type="entry name" value="RnfB/RsxB_Proteobac"/>
</dbReference>
<dbReference type="InterPro" id="IPR050294">
    <property type="entry name" value="RnfB_subfamily"/>
</dbReference>
<dbReference type="NCBIfam" id="NF003475">
    <property type="entry name" value="PRK05113.1"/>
    <property type="match status" value="1"/>
</dbReference>
<dbReference type="NCBIfam" id="TIGR01944">
    <property type="entry name" value="rnfB"/>
    <property type="match status" value="1"/>
</dbReference>
<dbReference type="PANTHER" id="PTHR42859:SF3">
    <property type="entry name" value="ION-TRANSLOCATING OXIDOREDUCTASE COMPLEX SUBUNIT B"/>
    <property type="match status" value="1"/>
</dbReference>
<dbReference type="PANTHER" id="PTHR42859">
    <property type="entry name" value="OXIDOREDUCTASE"/>
    <property type="match status" value="1"/>
</dbReference>
<dbReference type="Pfam" id="PF14697">
    <property type="entry name" value="Fer4_21"/>
    <property type="match status" value="1"/>
</dbReference>
<dbReference type="Pfam" id="PF04060">
    <property type="entry name" value="FeS"/>
    <property type="match status" value="1"/>
</dbReference>
<dbReference type="PIRSF" id="PIRSF005784">
    <property type="entry name" value="Elect_transpt_RnfB"/>
    <property type="match status" value="1"/>
</dbReference>
<dbReference type="SUPFAM" id="SSF54862">
    <property type="entry name" value="4Fe-4S ferredoxins"/>
    <property type="match status" value="1"/>
</dbReference>
<dbReference type="PROSITE" id="PS51656">
    <property type="entry name" value="4FE4S"/>
    <property type="match status" value="1"/>
</dbReference>
<dbReference type="PROSITE" id="PS00198">
    <property type="entry name" value="4FE4S_FER_1"/>
    <property type="match status" value="2"/>
</dbReference>
<dbReference type="PROSITE" id="PS51379">
    <property type="entry name" value="4FE4S_FER_2"/>
    <property type="match status" value="2"/>
</dbReference>
<comment type="function">
    <text evidence="1">Part of a membrane-bound complex that couples electron transfer with translocation of ions across the membrane.</text>
</comment>
<comment type="cofactor">
    <cofactor evidence="1">
        <name>[4Fe-4S] cluster</name>
        <dbReference type="ChEBI" id="CHEBI:49883"/>
    </cofactor>
    <text evidence="1">Binds 3 [4Fe-4S] clusters.</text>
</comment>
<comment type="subunit">
    <text evidence="1">The complex is composed of six subunits: RnfA, RnfB, RnfC, RnfD, RnfE and RnfG.</text>
</comment>
<comment type="subcellular location">
    <subcellularLocation>
        <location evidence="1">Cell inner membrane</location>
    </subcellularLocation>
</comment>
<comment type="similarity">
    <text evidence="1">Belongs to the 4Fe4S bacterial-type ferredoxin family. RnfB subfamily.</text>
</comment>